<proteinExistence type="inferred from homology"/>
<gene>
    <name type="ordered locus">ssl0259</name>
</gene>
<feature type="chain" id="PRO_0000157934" description="UPF0150 protein ssl0259">
    <location>
        <begin position="1"/>
        <end position="73"/>
    </location>
</feature>
<name>Y259_SYNY3</name>
<comment type="similarity">
    <text evidence="1">Belongs to the UPF0150 family.</text>
</comment>
<sequence>MNYPIVIYPCAEGGFVAEIPALCGCLAQGETLEETLEELMIVKDLWLETAQTHNQKLPSLEAEIAKIKMLSAA</sequence>
<organism>
    <name type="scientific">Synechocystis sp. (strain ATCC 27184 / PCC 6803 / Kazusa)</name>
    <dbReference type="NCBI Taxonomy" id="1111708"/>
    <lineage>
        <taxon>Bacteria</taxon>
        <taxon>Bacillati</taxon>
        <taxon>Cyanobacteriota</taxon>
        <taxon>Cyanophyceae</taxon>
        <taxon>Synechococcales</taxon>
        <taxon>Merismopediaceae</taxon>
        <taxon>Synechocystis</taxon>
    </lineage>
</organism>
<evidence type="ECO:0000305" key="1"/>
<accession>P74458</accession>
<dbReference type="EMBL" id="BA000022">
    <property type="protein sequence ID" value="BAA18559.1"/>
    <property type="molecule type" value="Genomic_DNA"/>
</dbReference>
<dbReference type="PIR" id="S76430">
    <property type="entry name" value="S76430"/>
</dbReference>
<dbReference type="SMR" id="P74458"/>
<dbReference type="STRING" id="1148.gene:10499441"/>
<dbReference type="PaxDb" id="1148-1653647"/>
<dbReference type="EnsemblBacteria" id="BAA18559">
    <property type="protein sequence ID" value="BAA18559"/>
    <property type="gene ID" value="BAA18559"/>
</dbReference>
<dbReference type="KEGG" id="syn:ssl0259"/>
<dbReference type="eggNOG" id="COG1598">
    <property type="taxonomic scope" value="Bacteria"/>
</dbReference>
<dbReference type="InParanoid" id="P74458"/>
<dbReference type="Proteomes" id="UP000001425">
    <property type="component" value="Chromosome"/>
</dbReference>
<dbReference type="GO" id="GO:0006355">
    <property type="term" value="P:regulation of DNA-templated transcription"/>
    <property type="evidence" value="ECO:0000318"/>
    <property type="project" value="GO_Central"/>
</dbReference>
<dbReference type="Gene3D" id="3.30.160.250">
    <property type="match status" value="1"/>
</dbReference>
<dbReference type="InterPro" id="IPR051404">
    <property type="entry name" value="TA_system_antitoxin"/>
</dbReference>
<dbReference type="InterPro" id="IPR049389">
    <property type="entry name" value="TTHA0281-like"/>
</dbReference>
<dbReference type="InterPro" id="IPR035069">
    <property type="entry name" value="TTHA1013/TTHA0281-like"/>
</dbReference>
<dbReference type="PANTHER" id="PTHR34504">
    <property type="entry name" value="ANTITOXIN HICB"/>
    <property type="match status" value="1"/>
</dbReference>
<dbReference type="PANTHER" id="PTHR34504:SF2">
    <property type="entry name" value="UPF0150 PROTEIN SSL0259"/>
    <property type="match status" value="1"/>
</dbReference>
<dbReference type="Pfam" id="PF21748">
    <property type="entry name" value="UPF0150"/>
    <property type="match status" value="1"/>
</dbReference>
<dbReference type="SUPFAM" id="SSF143100">
    <property type="entry name" value="TTHA1013/TTHA0281-like"/>
    <property type="match status" value="1"/>
</dbReference>
<reference key="1">
    <citation type="journal article" date="1996" name="DNA Res.">
        <title>Sequence analysis of the genome of the unicellular cyanobacterium Synechocystis sp. strain PCC6803. II. Sequence determination of the entire genome and assignment of potential protein-coding regions.</title>
        <authorList>
            <person name="Kaneko T."/>
            <person name="Sato S."/>
            <person name="Kotani H."/>
            <person name="Tanaka A."/>
            <person name="Asamizu E."/>
            <person name="Nakamura Y."/>
            <person name="Miyajima N."/>
            <person name="Hirosawa M."/>
            <person name="Sugiura M."/>
            <person name="Sasamoto S."/>
            <person name="Kimura T."/>
            <person name="Hosouchi T."/>
            <person name="Matsuno A."/>
            <person name="Muraki A."/>
            <person name="Nakazaki N."/>
            <person name="Naruo K."/>
            <person name="Okumura S."/>
            <person name="Shimpo S."/>
            <person name="Takeuchi C."/>
            <person name="Wada T."/>
            <person name="Watanabe A."/>
            <person name="Yamada M."/>
            <person name="Yasuda M."/>
            <person name="Tabata S."/>
        </authorList>
    </citation>
    <scope>NUCLEOTIDE SEQUENCE [LARGE SCALE GENOMIC DNA]</scope>
    <source>
        <strain>ATCC 27184 / PCC 6803 / Kazusa</strain>
    </source>
</reference>
<keyword id="KW-1185">Reference proteome</keyword>
<protein>
    <recommendedName>
        <fullName>UPF0150 protein ssl0259</fullName>
    </recommendedName>
</protein>